<sequence length="117" mass="13188">MAKYSSKINKIRTFALSLVFVGFIIMYIGLFFKQSVLLASLFMILGLLSIGLSTAVYFWIGMLSTKAVRVMCPACEKETKILGRVDMCMHCREPLTLDKGLEGKAFDESYNRKNSVK</sequence>
<accession>A7Z2P1</accession>
<protein>
    <recommendedName>
        <fullName evidence="1">UPF0295 protein RBAM_008830</fullName>
    </recommendedName>
</protein>
<organism>
    <name type="scientific">Bacillus velezensis (strain DSM 23117 / BGSC 10A6 / LMG 26770 / FZB42)</name>
    <name type="common">Bacillus amyloliquefaciens subsp. plantarum</name>
    <dbReference type="NCBI Taxonomy" id="326423"/>
    <lineage>
        <taxon>Bacteria</taxon>
        <taxon>Bacillati</taxon>
        <taxon>Bacillota</taxon>
        <taxon>Bacilli</taxon>
        <taxon>Bacillales</taxon>
        <taxon>Bacillaceae</taxon>
        <taxon>Bacillus</taxon>
        <taxon>Bacillus amyloliquefaciens group</taxon>
    </lineage>
</organism>
<proteinExistence type="inferred from homology"/>
<reference key="1">
    <citation type="journal article" date="2007" name="Nat. Biotechnol.">
        <title>Comparative analysis of the complete genome sequence of the plant growth-promoting bacterium Bacillus amyloliquefaciens FZB42.</title>
        <authorList>
            <person name="Chen X.H."/>
            <person name="Koumoutsi A."/>
            <person name="Scholz R."/>
            <person name="Eisenreich A."/>
            <person name="Schneider K."/>
            <person name="Heinemeyer I."/>
            <person name="Morgenstern B."/>
            <person name="Voss B."/>
            <person name="Hess W.R."/>
            <person name="Reva O."/>
            <person name="Junge H."/>
            <person name="Voigt B."/>
            <person name="Jungblut P.R."/>
            <person name="Vater J."/>
            <person name="Suessmuth R."/>
            <person name="Liesegang H."/>
            <person name="Strittmatter A."/>
            <person name="Gottschalk G."/>
            <person name="Borriss R."/>
        </authorList>
    </citation>
    <scope>NUCLEOTIDE SEQUENCE [LARGE SCALE GENOMIC DNA]</scope>
    <source>
        <strain>DSM 23117 / BGSC 10A6 / LMG 26770 / FZB42</strain>
    </source>
</reference>
<gene>
    <name type="ordered locus">RBAM_008830</name>
</gene>
<feature type="chain" id="PRO_1000024474" description="UPF0295 protein RBAM_008830">
    <location>
        <begin position="1"/>
        <end position="117"/>
    </location>
</feature>
<feature type="transmembrane region" description="Helical" evidence="1">
    <location>
        <begin position="13"/>
        <end position="33"/>
    </location>
</feature>
<feature type="transmembrane region" description="Helical" evidence="1">
    <location>
        <begin position="41"/>
        <end position="61"/>
    </location>
</feature>
<name>Y883_BACVZ</name>
<comment type="subcellular location">
    <subcellularLocation>
        <location evidence="1">Cell membrane</location>
        <topology evidence="1">Multi-pass membrane protein</topology>
    </subcellularLocation>
</comment>
<comment type="similarity">
    <text evidence="1">Belongs to the UPF0295 family.</text>
</comment>
<dbReference type="EMBL" id="CP000560">
    <property type="protein sequence ID" value="ABS73267.1"/>
    <property type="molecule type" value="Genomic_DNA"/>
</dbReference>
<dbReference type="RefSeq" id="WP_007408568.1">
    <property type="nucleotide sequence ID" value="NC_009725.2"/>
</dbReference>
<dbReference type="SMR" id="A7Z2P1"/>
<dbReference type="GeneID" id="93080016"/>
<dbReference type="KEGG" id="bay:RBAM_008830"/>
<dbReference type="HOGENOM" id="CLU_143991_0_0_9"/>
<dbReference type="Proteomes" id="UP000001120">
    <property type="component" value="Chromosome"/>
</dbReference>
<dbReference type="GO" id="GO:0005886">
    <property type="term" value="C:plasma membrane"/>
    <property type="evidence" value="ECO:0007669"/>
    <property type="project" value="UniProtKB-SubCell"/>
</dbReference>
<dbReference type="HAMAP" id="MF_01502">
    <property type="entry name" value="UPF0295"/>
    <property type="match status" value="1"/>
</dbReference>
<dbReference type="InterPro" id="IPR020912">
    <property type="entry name" value="UPF0295"/>
</dbReference>
<dbReference type="NCBIfam" id="NF002796">
    <property type="entry name" value="PRK02935.1"/>
    <property type="match status" value="1"/>
</dbReference>
<dbReference type="Pfam" id="PF11023">
    <property type="entry name" value="DUF2614"/>
    <property type="match status" value="1"/>
</dbReference>
<keyword id="KW-1003">Cell membrane</keyword>
<keyword id="KW-0472">Membrane</keyword>
<keyword id="KW-0812">Transmembrane</keyword>
<keyword id="KW-1133">Transmembrane helix</keyword>
<evidence type="ECO:0000255" key="1">
    <source>
        <dbReference type="HAMAP-Rule" id="MF_01502"/>
    </source>
</evidence>